<accession>A3DJK0</accession>
<feature type="chain" id="PRO_0000293267" description="Small ribosomal subunit protein uS4">
    <location>
        <begin position="1"/>
        <end position="208"/>
    </location>
</feature>
<feature type="domain" description="S4 RNA-binding" evidence="1">
    <location>
        <begin position="98"/>
        <end position="178"/>
    </location>
</feature>
<comment type="function">
    <text evidence="1">One of the primary rRNA binding proteins, it binds directly to 16S rRNA where it nucleates assembly of the body of the 30S subunit.</text>
</comment>
<comment type="function">
    <text evidence="1">With S5 and S12 plays an important role in translational accuracy.</text>
</comment>
<comment type="subunit">
    <text evidence="1">Part of the 30S ribosomal subunit. Contacts protein S5. The interaction surface between S4 and S5 is involved in control of translational fidelity.</text>
</comment>
<comment type="similarity">
    <text evidence="1">Belongs to the universal ribosomal protein uS4 family.</text>
</comment>
<sequence length="208" mass="23942">MARYTGASCRLCRREGEKLYLKGERCTTNKCAIARRGYAPGQHGQNKKKLSEYGLQLREKQKARRYYGILEGQFRRYFEMAVKKKGITGENLLQILESRLDNVVYRMGLAVSRREARQLVRHGHFTVNGKRVDIPSYLVKVGDVIAVKEKSKSSPKMQSNKEYAAGRPRPKWLEYDAEEMSGKVVALPAREDIDLPIRENLIVELYSK</sequence>
<gene>
    <name evidence="1" type="primary">rpsD</name>
    <name type="ordered locus">Cthe_2931</name>
</gene>
<proteinExistence type="inferred from homology"/>
<keyword id="KW-1185">Reference proteome</keyword>
<keyword id="KW-0687">Ribonucleoprotein</keyword>
<keyword id="KW-0689">Ribosomal protein</keyword>
<keyword id="KW-0694">RNA-binding</keyword>
<keyword id="KW-0699">rRNA-binding</keyword>
<organism>
    <name type="scientific">Acetivibrio thermocellus (strain ATCC 27405 / DSM 1237 / JCM 9322 / NBRC 103400 / NCIMB 10682 / NRRL B-4536 / VPI 7372)</name>
    <name type="common">Clostridium thermocellum</name>
    <dbReference type="NCBI Taxonomy" id="203119"/>
    <lineage>
        <taxon>Bacteria</taxon>
        <taxon>Bacillati</taxon>
        <taxon>Bacillota</taxon>
        <taxon>Clostridia</taxon>
        <taxon>Eubacteriales</taxon>
        <taxon>Oscillospiraceae</taxon>
        <taxon>Acetivibrio</taxon>
    </lineage>
</organism>
<dbReference type="EMBL" id="CP000568">
    <property type="protein sequence ID" value="ABN54129.1"/>
    <property type="molecule type" value="Genomic_DNA"/>
</dbReference>
<dbReference type="RefSeq" id="WP_003514677.1">
    <property type="nucleotide sequence ID" value="NC_009012.1"/>
</dbReference>
<dbReference type="SMR" id="A3DJK0"/>
<dbReference type="STRING" id="203119.Cthe_2931"/>
<dbReference type="GeneID" id="35806019"/>
<dbReference type="KEGG" id="cth:Cthe_2931"/>
<dbReference type="eggNOG" id="COG0522">
    <property type="taxonomic scope" value="Bacteria"/>
</dbReference>
<dbReference type="HOGENOM" id="CLU_092403_0_2_9"/>
<dbReference type="OrthoDB" id="9803672at2"/>
<dbReference type="Proteomes" id="UP000002145">
    <property type="component" value="Chromosome"/>
</dbReference>
<dbReference type="GO" id="GO:0015935">
    <property type="term" value="C:small ribosomal subunit"/>
    <property type="evidence" value="ECO:0007669"/>
    <property type="project" value="InterPro"/>
</dbReference>
<dbReference type="GO" id="GO:0019843">
    <property type="term" value="F:rRNA binding"/>
    <property type="evidence" value="ECO:0007669"/>
    <property type="project" value="UniProtKB-UniRule"/>
</dbReference>
<dbReference type="GO" id="GO:0003735">
    <property type="term" value="F:structural constituent of ribosome"/>
    <property type="evidence" value="ECO:0007669"/>
    <property type="project" value="InterPro"/>
</dbReference>
<dbReference type="GO" id="GO:0042274">
    <property type="term" value="P:ribosomal small subunit biogenesis"/>
    <property type="evidence" value="ECO:0007669"/>
    <property type="project" value="TreeGrafter"/>
</dbReference>
<dbReference type="GO" id="GO:0006412">
    <property type="term" value="P:translation"/>
    <property type="evidence" value="ECO:0007669"/>
    <property type="project" value="UniProtKB-UniRule"/>
</dbReference>
<dbReference type="CDD" id="cd00165">
    <property type="entry name" value="S4"/>
    <property type="match status" value="1"/>
</dbReference>
<dbReference type="FunFam" id="1.10.1050.10:FF:000001">
    <property type="entry name" value="30S ribosomal protein S4"/>
    <property type="match status" value="1"/>
</dbReference>
<dbReference type="FunFam" id="3.10.290.10:FF:000001">
    <property type="entry name" value="30S ribosomal protein S4"/>
    <property type="match status" value="1"/>
</dbReference>
<dbReference type="Gene3D" id="1.10.1050.10">
    <property type="entry name" value="Ribosomal Protein S4 Delta 41, Chain A, domain 1"/>
    <property type="match status" value="1"/>
</dbReference>
<dbReference type="Gene3D" id="3.10.290.10">
    <property type="entry name" value="RNA-binding S4 domain"/>
    <property type="match status" value="1"/>
</dbReference>
<dbReference type="HAMAP" id="MF_01306_B">
    <property type="entry name" value="Ribosomal_uS4_B"/>
    <property type="match status" value="1"/>
</dbReference>
<dbReference type="InterPro" id="IPR022801">
    <property type="entry name" value="Ribosomal_uS4"/>
</dbReference>
<dbReference type="InterPro" id="IPR005709">
    <property type="entry name" value="Ribosomal_uS4_bac-type"/>
</dbReference>
<dbReference type="InterPro" id="IPR018079">
    <property type="entry name" value="Ribosomal_uS4_CS"/>
</dbReference>
<dbReference type="InterPro" id="IPR001912">
    <property type="entry name" value="Ribosomal_uS4_N"/>
</dbReference>
<dbReference type="InterPro" id="IPR002942">
    <property type="entry name" value="S4_RNA-bd"/>
</dbReference>
<dbReference type="InterPro" id="IPR036986">
    <property type="entry name" value="S4_RNA-bd_sf"/>
</dbReference>
<dbReference type="NCBIfam" id="NF003717">
    <property type="entry name" value="PRK05327.1"/>
    <property type="match status" value="1"/>
</dbReference>
<dbReference type="NCBIfam" id="TIGR01017">
    <property type="entry name" value="rpsD_bact"/>
    <property type="match status" value="1"/>
</dbReference>
<dbReference type="PANTHER" id="PTHR11831">
    <property type="entry name" value="30S 40S RIBOSOMAL PROTEIN"/>
    <property type="match status" value="1"/>
</dbReference>
<dbReference type="PANTHER" id="PTHR11831:SF4">
    <property type="entry name" value="SMALL RIBOSOMAL SUBUNIT PROTEIN US4M"/>
    <property type="match status" value="1"/>
</dbReference>
<dbReference type="Pfam" id="PF00163">
    <property type="entry name" value="Ribosomal_S4"/>
    <property type="match status" value="1"/>
</dbReference>
<dbReference type="Pfam" id="PF01479">
    <property type="entry name" value="S4"/>
    <property type="match status" value="1"/>
</dbReference>
<dbReference type="SMART" id="SM01390">
    <property type="entry name" value="Ribosomal_S4"/>
    <property type="match status" value="1"/>
</dbReference>
<dbReference type="SMART" id="SM00363">
    <property type="entry name" value="S4"/>
    <property type="match status" value="1"/>
</dbReference>
<dbReference type="SUPFAM" id="SSF55174">
    <property type="entry name" value="Alpha-L RNA-binding motif"/>
    <property type="match status" value="1"/>
</dbReference>
<dbReference type="PROSITE" id="PS00632">
    <property type="entry name" value="RIBOSOMAL_S4"/>
    <property type="match status" value="1"/>
</dbReference>
<dbReference type="PROSITE" id="PS50889">
    <property type="entry name" value="S4"/>
    <property type="match status" value="1"/>
</dbReference>
<reference key="1">
    <citation type="submission" date="2007-02" db="EMBL/GenBank/DDBJ databases">
        <title>Complete sequence of Clostridium thermocellum ATCC 27405.</title>
        <authorList>
            <consortium name="US DOE Joint Genome Institute"/>
            <person name="Copeland A."/>
            <person name="Lucas S."/>
            <person name="Lapidus A."/>
            <person name="Barry K."/>
            <person name="Detter J.C."/>
            <person name="Glavina del Rio T."/>
            <person name="Hammon N."/>
            <person name="Israni S."/>
            <person name="Dalin E."/>
            <person name="Tice H."/>
            <person name="Pitluck S."/>
            <person name="Chertkov O."/>
            <person name="Brettin T."/>
            <person name="Bruce D."/>
            <person name="Han C."/>
            <person name="Tapia R."/>
            <person name="Gilna P."/>
            <person name="Schmutz J."/>
            <person name="Larimer F."/>
            <person name="Land M."/>
            <person name="Hauser L."/>
            <person name="Kyrpides N."/>
            <person name="Mikhailova N."/>
            <person name="Wu J.H.D."/>
            <person name="Newcomb M."/>
            <person name="Richardson P."/>
        </authorList>
    </citation>
    <scope>NUCLEOTIDE SEQUENCE [LARGE SCALE GENOMIC DNA]</scope>
    <source>
        <strain>ATCC 27405 / DSM 1237 / JCM 9322 / NBRC 103400 / NCIMB 10682 / NRRL B-4536 / VPI 7372</strain>
    </source>
</reference>
<evidence type="ECO:0000255" key="1">
    <source>
        <dbReference type="HAMAP-Rule" id="MF_01306"/>
    </source>
</evidence>
<evidence type="ECO:0000305" key="2"/>
<protein>
    <recommendedName>
        <fullName evidence="1">Small ribosomal subunit protein uS4</fullName>
    </recommendedName>
    <alternativeName>
        <fullName evidence="2">30S ribosomal protein S4</fullName>
    </alternativeName>
</protein>
<name>RS4_ACET2</name>